<organism>
    <name type="scientific">Saccharomyces cerevisiae (strain ATCC 204508 / S288c)</name>
    <name type="common">Baker's yeast</name>
    <dbReference type="NCBI Taxonomy" id="559292"/>
    <lineage>
        <taxon>Eukaryota</taxon>
        <taxon>Fungi</taxon>
        <taxon>Dikarya</taxon>
        <taxon>Ascomycota</taxon>
        <taxon>Saccharomycotina</taxon>
        <taxon>Saccharomycetes</taxon>
        <taxon>Saccharomycetales</taxon>
        <taxon>Saccharomycetaceae</taxon>
        <taxon>Saccharomyces</taxon>
    </lineage>
</organism>
<reference key="1">
    <citation type="journal article" date="1997" name="Nature">
        <title>The nucleotide sequence of Saccharomyces cerevisiae chromosome XV.</title>
        <authorList>
            <person name="Dujon B."/>
            <person name="Albermann K."/>
            <person name="Aldea M."/>
            <person name="Alexandraki D."/>
            <person name="Ansorge W."/>
            <person name="Arino J."/>
            <person name="Benes V."/>
            <person name="Bohn C."/>
            <person name="Bolotin-Fukuhara M."/>
            <person name="Bordonne R."/>
            <person name="Boyer J."/>
            <person name="Camasses A."/>
            <person name="Casamayor A."/>
            <person name="Casas C."/>
            <person name="Cheret G."/>
            <person name="Cziepluch C."/>
            <person name="Daignan-Fornier B."/>
            <person name="Dang V.-D."/>
            <person name="de Haan M."/>
            <person name="Delius H."/>
            <person name="Durand P."/>
            <person name="Fairhead C."/>
            <person name="Feldmann H."/>
            <person name="Gaillon L."/>
            <person name="Galisson F."/>
            <person name="Gamo F.-J."/>
            <person name="Gancedo C."/>
            <person name="Goffeau A."/>
            <person name="Goulding S.E."/>
            <person name="Grivell L.A."/>
            <person name="Habbig B."/>
            <person name="Hand N.J."/>
            <person name="Hani J."/>
            <person name="Hattenhorst U."/>
            <person name="Hebling U."/>
            <person name="Hernando Y."/>
            <person name="Herrero E."/>
            <person name="Heumann K."/>
            <person name="Hiesel R."/>
            <person name="Hilger F."/>
            <person name="Hofmann B."/>
            <person name="Hollenberg C.P."/>
            <person name="Hughes B."/>
            <person name="Jauniaux J.-C."/>
            <person name="Kalogeropoulos A."/>
            <person name="Katsoulou C."/>
            <person name="Kordes E."/>
            <person name="Lafuente M.J."/>
            <person name="Landt O."/>
            <person name="Louis E.J."/>
            <person name="Maarse A.C."/>
            <person name="Madania A."/>
            <person name="Mannhaupt G."/>
            <person name="Marck C."/>
            <person name="Martin R.P."/>
            <person name="Mewes H.-W."/>
            <person name="Michaux G."/>
            <person name="Paces V."/>
            <person name="Parle-McDermott A.G."/>
            <person name="Pearson B.M."/>
            <person name="Perrin A."/>
            <person name="Pettersson B."/>
            <person name="Poch O."/>
            <person name="Pohl T.M."/>
            <person name="Poirey R."/>
            <person name="Portetelle D."/>
            <person name="Pujol A."/>
            <person name="Purnelle B."/>
            <person name="Ramezani Rad M."/>
            <person name="Rechmann S."/>
            <person name="Schwager C."/>
            <person name="Schweizer M."/>
            <person name="Sor F."/>
            <person name="Sterky F."/>
            <person name="Tarassov I.A."/>
            <person name="Teodoru C."/>
            <person name="Tettelin H."/>
            <person name="Thierry A."/>
            <person name="Tobiasch E."/>
            <person name="Tzermia M."/>
            <person name="Uhlen M."/>
            <person name="Unseld M."/>
            <person name="Valens M."/>
            <person name="Vandenbol M."/>
            <person name="Vetter I."/>
            <person name="Vlcek C."/>
            <person name="Voet M."/>
            <person name="Volckaert G."/>
            <person name="Voss H."/>
            <person name="Wambutt R."/>
            <person name="Wedler H."/>
            <person name="Wiemann S."/>
            <person name="Winsor B."/>
            <person name="Wolfe K.H."/>
            <person name="Zollner A."/>
            <person name="Zumstein E."/>
            <person name="Kleine K."/>
        </authorList>
    </citation>
    <scope>NUCLEOTIDE SEQUENCE [LARGE SCALE GENOMIC DNA]</scope>
    <source>
        <strain>ATCC 204508 / S288c</strain>
    </source>
</reference>
<reference key="2">
    <citation type="journal article" date="2014" name="G3 (Bethesda)">
        <title>The reference genome sequence of Saccharomyces cerevisiae: Then and now.</title>
        <authorList>
            <person name="Engel S.R."/>
            <person name="Dietrich F.S."/>
            <person name="Fisk D.G."/>
            <person name="Binkley G."/>
            <person name="Balakrishnan R."/>
            <person name="Costanzo M.C."/>
            <person name="Dwight S.S."/>
            <person name="Hitz B.C."/>
            <person name="Karra K."/>
            <person name="Nash R.S."/>
            <person name="Weng S."/>
            <person name="Wong E.D."/>
            <person name="Lloyd P."/>
            <person name="Skrzypek M.S."/>
            <person name="Miyasato S.R."/>
            <person name="Simison M."/>
            <person name="Cherry J.M."/>
        </authorList>
    </citation>
    <scope>GENOME REANNOTATION</scope>
    <source>
        <strain>ATCC 204508 / S288c</strain>
    </source>
</reference>
<reference key="3">
    <citation type="journal article" date="1998" name="J. Biol. Chem.">
        <title>Metalloregulation of FRE1 and FRE2 homologs in Saccharomyces cerevisiae.</title>
        <authorList>
            <person name="Martins L.J."/>
            <person name="Jensen L.T."/>
            <person name="Simon J.R."/>
            <person name="Keller G.L."/>
            <person name="Winge D.R."/>
        </authorList>
    </citation>
    <scope>INDUCTION</scope>
</reference>
<reference key="4">
    <citation type="journal article" date="1998" name="J. Biol. Chem.">
        <authorList>
            <person name="Martins L.J."/>
            <person name="Jensen L.T."/>
            <person name="Simon J.R."/>
            <person name="Keller G.L."/>
            <person name="Winge D.R."/>
        </authorList>
    </citation>
    <scope>ERRATUM OF PUBMED:9726978</scope>
</reference>
<reference key="5">
    <citation type="journal article" date="1999" name="Yeast">
        <title>Regulated expression of the Saccharomyces cerevisiae Fre1p/Fre2p Fe/Cu reductase related genes.</title>
        <authorList>
            <person name="Georgatsou E."/>
            <person name="Alexandraki D."/>
        </authorList>
    </citation>
    <scope>INDUCTION</scope>
</reference>
<reference key="6">
    <citation type="journal article" date="2001" name="J. Biol. Chem.">
        <title>The role of the FRE family of plasma membrane reductases in the uptake of siderophore-iron in Saccharomyces cerevisiae.</title>
        <authorList>
            <person name="Yun C.-W."/>
            <person name="Bauler M."/>
            <person name="Moore R.E."/>
            <person name="Klebba P.E."/>
            <person name="Philpott C.C."/>
        </authorList>
    </citation>
    <scope>FUNCTION</scope>
    <scope>SUBCELLULAR LOCATION</scope>
</reference>
<reference key="7">
    <citation type="journal article" date="2006" name="Proc. Natl. Acad. Sci. U.S.A.">
        <title>A global topology map of the Saccharomyces cerevisiae membrane proteome.</title>
        <authorList>
            <person name="Kim H."/>
            <person name="Melen K."/>
            <person name="Oesterberg M."/>
            <person name="von Heijne G."/>
        </authorList>
    </citation>
    <scope>TOPOLOGY [LARGE SCALE ANALYSIS]</scope>
    <source>
        <strain>ATCC 208353 / W303-1A</strain>
    </source>
</reference>
<protein>
    <recommendedName>
        <fullName>Ferric reductase transmembrane component 3</fullName>
        <ecNumber>1.16.1.9</ecNumber>
    </recommendedName>
    <alternativeName>
        <fullName>Ferric-chelate reductase 3</fullName>
    </alternativeName>
</protein>
<evidence type="ECO:0000250" key="1"/>
<evidence type="ECO:0000255" key="2"/>
<evidence type="ECO:0000255" key="3">
    <source>
        <dbReference type="PROSITE-ProRule" id="PRU00716"/>
    </source>
</evidence>
<evidence type="ECO:0000269" key="4">
    <source>
    </source>
</evidence>
<evidence type="ECO:0000269" key="5">
    <source>
    </source>
</evidence>
<evidence type="ECO:0000269" key="6">
    <source>
    </source>
</evidence>
<evidence type="ECO:0000305" key="7"/>
<name>FRE3_YEAST</name>
<dbReference type="EC" id="1.16.1.9"/>
<dbReference type="EMBL" id="Z75289">
    <property type="protein sequence ID" value="CAA99713.1"/>
    <property type="molecule type" value="Genomic_DNA"/>
</dbReference>
<dbReference type="EMBL" id="BK006948">
    <property type="protein sequence ID" value="DAA11139.1"/>
    <property type="molecule type" value="Genomic_DNA"/>
</dbReference>
<dbReference type="PIR" id="S67293">
    <property type="entry name" value="S67293"/>
</dbReference>
<dbReference type="RefSeq" id="NP_015026.1">
    <property type="nucleotide sequence ID" value="NM_001183801.1"/>
</dbReference>
<dbReference type="SMR" id="Q08905"/>
<dbReference type="BioGRID" id="34762">
    <property type="interactions" value="97"/>
</dbReference>
<dbReference type="DIP" id="DIP-4049N"/>
<dbReference type="FunCoup" id="Q08905">
    <property type="interactions" value="476"/>
</dbReference>
<dbReference type="IntAct" id="Q08905">
    <property type="interactions" value="1"/>
</dbReference>
<dbReference type="MINT" id="Q08905"/>
<dbReference type="STRING" id="4932.YOR381W"/>
<dbReference type="GlyCosmos" id="Q08905">
    <property type="glycosylation" value="4 sites, No reported glycans"/>
</dbReference>
<dbReference type="GlyGen" id="Q08905">
    <property type="glycosylation" value="4 sites"/>
</dbReference>
<dbReference type="PaxDb" id="4932-YOR381W"/>
<dbReference type="PeptideAtlas" id="Q08905"/>
<dbReference type="EnsemblFungi" id="YOR381W_mRNA">
    <property type="protein sequence ID" value="YOR381W"/>
    <property type="gene ID" value="YOR381W"/>
</dbReference>
<dbReference type="GeneID" id="854563"/>
<dbReference type="KEGG" id="sce:YOR381W"/>
<dbReference type="AGR" id="SGD:S000005908"/>
<dbReference type="SGD" id="S000005908">
    <property type="gene designation" value="FRE3"/>
</dbReference>
<dbReference type="VEuPathDB" id="FungiDB:YOR381W"/>
<dbReference type="eggNOG" id="KOG0039">
    <property type="taxonomic scope" value="Eukaryota"/>
</dbReference>
<dbReference type="GeneTree" id="ENSGT00940000176303"/>
<dbReference type="HOGENOM" id="CLU_010365_4_0_1"/>
<dbReference type="InParanoid" id="Q08905"/>
<dbReference type="OMA" id="GAPFHKY"/>
<dbReference type="OrthoDB" id="4494341at2759"/>
<dbReference type="BioCyc" id="YEAST:YOR381W-MONOMER"/>
<dbReference type="BioGRID-ORCS" id="854563">
    <property type="hits" value="1 hit in 10 CRISPR screens"/>
</dbReference>
<dbReference type="PRO" id="PR:Q08905"/>
<dbReference type="Proteomes" id="UP000002311">
    <property type="component" value="Chromosome XV"/>
</dbReference>
<dbReference type="RNAct" id="Q08905">
    <property type="molecule type" value="protein"/>
</dbReference>
<dbReference type="GO" id="GO:0000324">
    <property type="term" value="C:fungal-type vacuole"/>
    <property type="evidence" value="ECO:0007005"/>
    <property type="project" value="SGD"/>
</dbReference>
<dbReference type="GO" id="GO:0005886">
    <property type="term" value="C:plasma membrane"/>
    <property type="evidence" value="ECO:0000314"/>
    <property type="project" value="SGD"/>
</dbReference>
<dbReference type="GO" id="GO:0052851">
    <property type="term" value="F:ferric-chelate reductase (NADPH) activity"/>
    <property type="evidence" value="ECO:0007669"/>
    <property type="project" value="UniProtKB-EC"/>
</dbReference>
<dbReference type="GO" id="GO:0000293">
    <property type="term" value="F:ferric-chelate reductase activity"/>
    <property type="evidence" value="ECO:0000316"/>
    <property type="project" value="SGD"/>
</dbReference>
<dbReference type="GO" id="GO:0046872">
    <property type="term" value="F:metal ion binding"/>
    <property type="evidence" value="ECO:0007669"/>
    <property type="project" value="UniProtKB-KW"/>
</dbReference>
<dbReference type="GO" id="GO:0015677">
    <property type="term" value="P:copper ion import"/>
    <property type="evidence" value="ECO:0000318"/>
    <property type="project" value="GO_Central"/>
</dbReference>
<dbReference type="GO" id="GO:0006879">
    <property type="term" value="P:intracellular iron ion homeostasis"/>
    <property type="evidence" value="ECO:0000315"/>
    <property type="project" value="SGD"/>
</dbReference>
<dbReference type="GO" id="GO:0006826">
    <property type="term" value="P:iron ion transport"/>
    <property type="evidence" value="ECO:0000318"/>
    <property type="project" value="GO_Central"/>
</dbReference>
<dbReference type="GO" id="GO:0015891">
    <property type="term" value="P:siderophore transport"/>
    <property type="evidence" value="ECO:0000315"/>
    <property type="project" value="SGD"/>
</dbReference>
<dbReference type="CDD" id="cd06186">
    <property type="entry name" value="NOX_Duox_like_FAD_NADP"/>
    <property type="match status" value="1"/>
</dbReference>
<dbReference type="FunFam" id="3.40.50.80:FF:000035">
    <property type="entry name" value="FRE4p Ferric reductase"/>
    <property type="match status" value="1"/>
</dbReference>
<dbReference type="Gene3D" id="3.40.50.80">
    <property type="entry name" value="Nucleotide-binding domain of ferredoxin-NADP reductase (FNR) module"/>
    <property type="match status" value="1"/>
</dbReference>
<dbReference type="InterPro" id="IPR013112">
    <property type="entry name" value="FAD-bd_8"/>
</dbReference>
<dbReference type="InterPro" id="IPR017927">
    <property type="entry name" value="FAD-bd_FR_type"/>
</dbReference>
<dbReference type="InterPro" id="IPR013130">
    <property type="entry name" value="Fe3_Rdtase_TM_dom"/>
</dbReference>
<dbReference type="InterPro" id="IPR013121">
    <property type="entry name" value="Fe_red_NAD-bd_6"/>
</dbReference>
<dbReference type="InterPro" id="IPR051410">
    <property type="entry name" value="Ferric/Cupric_Reductase"/>
</dbReference>
<dbReference type="InterPro" id="IPR039261">
    <property type="entry name" value="FNR_nucleotide-bd"/>
</dbReference>
<dbReference type="InterPro" id="IPR017938">
    <property type="entry name" value="Riboflavin_synthase-like_b-brl"/>
</dbReference>
<dbReference type="PANTHER" id="PTHR32361:SF9">
    <property type="entry name" value="FERRIC REDUCTASE TRANSMEMBRANE COMPONENT 3-RELATED"/>
    <property type="match status" value="1"/>
</dbReference>
<dbReference type="PANTHER" id="PTHR32361">
    <property type="entry name" value="FERRIC/CUPRIC REDUCTASE TRANSMEMBRANE COMPONENT"/>
    <property type="match status" value="1"/>
</dbReference>
<dbReference type="Pfam" id="PF08022">
    <property type="entry name" value="FAD_binding_8"/>
    <property type="match status" value="1"/>
</dbReference>
<dbReference type="Pfam" id="PF01794">
    <property type="entry name" value="Ferric_reduct"/>
    <property type="match status" value="1"/>
</dbReference>
<dbReference type="Pfam" id="PF08030">
    <property type="entry name" value="NAD_binding_6"/>
    <property type="match status" value="1"/>
</dbReference>
<dbReference type="SFLD" id="SFLDF00464">
    <property type="entry name" value="Ferric/cupric_reductase"/>
    <property type="match status" value="1"/>
</dbReference>
<dbReference type="SFLD" id="SFLDS00052">
    <property type="entry name" value="Ferric_Reductase_Domain"/>
    <property type="match status" value="1"/>
</dbReference>
<dbReference type="SFLD" id="SFLDG01168">
    <property type="entry name" value="Ferric_reductase_subgroup_(FRE"/>
    <property type="match status" value="1"/>
</dbReference>
<dbReference type="SUPFAM" id="SSF52343">
    <property type="entry name" value="Ferredoxin reductase-like, C-terminal NADP-linked domain"/>
    <property type="match status" value="1"/>
</dbReference>
<dbReference type="SUPFAM" id="SSF63380">
    <property type="entry name" value="Riboflavin synthase domain-like"/>
    <property type="match status" value="1"/>
</dbReference>
<dbReference type="PROSITE" id="PS51384">
    <property type="entry name" value="FAD_FR"/>
    <property type="match status" value="1"/>
</dbReference>
<keyword id="KW-1003">Cell membrane</keyword>
<keyword id="KW-0249">Electron transport</keyword>
<keyword id="KW-0274">FAD</keyword>
<keyword id="KW-0285">Flavoprotein</keyword>
<keyword id="KW-0325">Glycoprotein</keyword>
<keyword id="KW-0349">Heme</keyword>
<keyword id="KW-0406">Ion transport</keyword>
<keyword id="KW-0408">Iron</keyword>
<keyword id="KW-0410">Iron transport</keyword>
<keyword id="KW-0472">Membrane</keyword>
<keyword id="KW-0479">Metal-binding</keyword>
<keyword id="KW-0521">NADP</keyword>
<keyword id="KW-0560">Oxidoreductase</keyword>
<keyword id="KW-1185">Reference proteome</keyword>
<keyword id="KW-0732">Signal</keyword>
<keyword id="KW-0812">Transmembrane</keyword>
<keyword id="KW-1133">Transmembrane helix</keyword>
<keyword id="KW-0813">Transport</keyword>
<proteinExistence type="evidence at protein level"/>
<gene>
    <name type="primary">FRE3</name>
    <name type="ordered locus">YOR381W</name>
    <name type="ORF">O6754</name>
</gene>
<feature type="signal peptide" evidence="2">
    <location>
        <begin position="1"/>
        <end position="20"/>
    </location>
</feature>
<feature type="chain" id="PRO_0000010139" description="Ferric reductase transmembrane component 3">
    <location>
        <begin position="21"/>
        <end position="711"/>
    </location>
</feature>
<feature type="topological domain" description="Extracellular" evidence="2">
    <location>
        <begin position="21"/>
        <end position="166"/>
    </location>
</feature>
<feature type="transmembrane region" description="Helical; Name=1" evidence="2">
    <location>
        <begin position="167"/>
        <end position="187"/>
    </location>
</feature>
<feature type="topological domain" description="Cytoplasmic" evidence="2">
    <location>
        <begin position="188"/>
        <end position="237"/>
    </location>
</feature>
<feature type="transmembrane region" description="Helical; Name=2" evidence="2">
    <location>
        <begin position="238"/>
        <end position="258"/>
    </location>
</feature>
<feature type="topological domain" description="Extracellular" evidence="2">
    <location>
        <begin position="259"/>
        <end position="280"/>
    </location>
</feature>
<feature type="transmembrane region" description="Helical; Name=3" evidence="2">
    <location>
        <begin position="281"/>
        <end position="301"/>
    </location>
</feature>
<feature type="topological domain" description="Cytoplasmic" evidence="2">
    <location>
        <begin position="302"/>
        <end position="321"/>
    </location>
</feature>
<feature type="transmembrane region" description="Helical; Name=4" evidence="2">
    <location>
        <begin position="322"/>
        <end position="341"/>
    </location>
</feature>
<feature type="topological domain" description="Extracellular" evidence="2">
    <location>
        <begin position="342"/>
        <end position="353"/>
    </location>
</feature>
<feature type="transmembrane region" description="Helical; Name=5" evidence="2">
    <location>
        <begin position="354"/>
        <end position="374"/>
    </location>
</feature>
<feature type="topological domain" description="Cytoplasmic" evidence="2">
    <location>
        <begin position="375"/>
        <end position="376"/>
    </location>
</feature>
<feature type="transmembrane region" description="Helical; Name=6" evidence="2">
    <location>
        <begin position="377"/>
        <end position="397"/>
    </location>
</feature>
<feature type="topological domain" description="Extracellular" evidence="2">
    <location>
        <position position="398"/>
    </location>
</feature>
<feature type="transmembrane region" description="Helical; Name=7" evidence="2">
    <location>
        <begin position="399"/>
        <end position="419"/>
    </location>
</feature>
<feature type="topological domain" description="Cytoplasmic" evidence="2">
    <location>
        <begin position="420"/>
        <end position="711"/>
    </location>
</feature>
<feature type="domain" description="Ferric oxidoreductase">
    <location>
        <begin position="280"/>
        <end position="414"/>
    </location>
</feature>
<feature type="domain" description="FAD-binding FR-type" evidence="3">
    <location>
        <begin position="415"/>
        <end position="534"/>
    </location>
</feature>
<feature type="binding site" description="axial binding residue" evidence="1">
    <location>
        <position position="316"/>
    </location>
    <ligand>
        <name>heme</name>
        <dbReference type="ChEBI" id="CHEBI:30413"/>
        <label>1</label>
    </ligand>
    <ligandPart>
        <name>Fe</name>
        <dbReference type="ChEBI" id="CHEBI:18248"/>
    </ligandPart>
</feature>
<feature type="binding site" description="axial binding residue" evidence="1">
    <location>
        <position position="330"/>
    </location>
    <ligand>
        <name>heme</name>
        <dbReference type="ChEBI" id="CHEBI:30413"/>
        <label>2</label>
    </ligand>
    <ligandPart>
        <name>Fe</name>
        <dbReference type="ChEBI" id="CHEBI:18248"/>
    </ligandPart>
</feature>
<feature type="binding site" description="axial binding residue" evidence="1">
    <location>
        <position position="386"/>
    </location>
    <ligand>
        <name>heme</name>
        <dbReference type="ChEBI" id="CHEBI:30413"/>
        <label>1</label>
    </ligand>
    <ligandPart>
        <name>Fe</name>
        <dbReference type="ChEBI" id="CHEBI:18248"/>
    </ligandPart>
</feature>
<feature type="binding site" description="axial binding residue" evidence="1">
    <location>
        <position position="400"/>
    </location>
    <ligand>
        <name>heme</name>
        <dbReference type="ChEBI" id="CHEBI:30413"/>
        <label>2</label>
    </ligand>
    <ligandPart>
        <name>Fe</name>
        <dbReference type="ChEBI" id="CHEBI:18248"/>
    </ligandPart>
</feature>
<feature type="binding site" evidence="2">
    <location>
        <begin position="479"/>
        <end position="485"/>
    </location>
    <ligand>
        <name>FAD</name>
        <dbReference type="ChEBI" id="CHEBI:57692"/>
    </ligand>
</feature>
<feature type="binding site" evidence="2">
    <location>
        <begin position="526"/>
        <end position="529"/>
    </location>
    <ligand>
        <name>NADP(+)</name>
        <dbReference type="ChEBI" id="CHEBI:58349"/>
    </ligand>
</feature>
<feature type="binding site" evidence="2">
    <location>
        <begin position="677"/>
        <end position="678"/>
    </location>
    <ligand>
        <name>NADP(+)</name>
        <dbReference type="ChEBI" id="CHEBI:58349"/>
    </ligand>
</feature>
<feature type="glycosylation site" description="N-linked (GlcNAc...) asparagine" evidence="2">
    <location>
        <position position="85"/>
    </location>
</feature>
<feature type="glycosylation site" description="N-linked (GlcNAc...) asparagine" evidence="2">
    <location>
        <position position="108"/>
    </location>
</feature>
<feature type="glycosylation site" description="N-linked (GlcNAc...) asparagine" evidence="2">
    <location>
        <position position="120"/>
    </location>
</feature>
<feature type="glycosylation site" description="N-linked (GlcNAc...) asparagine" evidence="2">
    <location>
        <position position="134"/>
    </location>
</feature>
<accession>Q08905</accession>
<accession>D6W373</accession>
<sequence length="711" mass="80589">MYWVLLCGSILLCCLSGASASPAKTKMYGKLPLVLTDACMGVLGEVTWEYSSDDLYSSPACTYEPALQSMLYCIYESLNEKGYSNRTFEKTFAAIKEDCAYYTDNLQNMTNADFYNMLNNGTTYIIQYSEGSANLTYPIEMDAQVRENYYYSYHGFYANYDIGHTYGGIICAYFVGVMILASILHYLSYTPFKTALFKQRLVRYVRRYLTIPTIWGKHASSFSYLKIFTGFLPTRSEGVIILGYLVLHTVFLAYGYQYDPYNLIFDSRREQIARYVADRSGVLAFAHFPLIALFAGRNNFLEFISGVKYTSFIMFHKWLGRMMFLDAVIHGAAYTSYSVFYKDWAASKEETYWQFGVAALCIVGVMVFFSLAMFRKFFYEAFLFLHIVLGALFFYTCWEHVVELSGIEWIYAAIAIWTIDRLIRIVRVSYFGFPKASLQLVGDDIIRVTVKRPVRLWKAKPGQYVFVSFLHHLYFWQSHPFTVLDSIIKDGELTIILKEKKGVTKLVKKYVCCNGGKASMRLAIEGPYGSSSPVNNYDNVLLLTGGTGLPGPIAHAIKLGKTSAATGKQFIKLVIAVRGFNVLEAYKPELMCLEDLNVQLHIYNTMEVPALTPNDSLEISQQDEKADGKGVVMATTLEQSPNPVEFDGTVFHHGRPNVEKLLHEVGDLNGSLAVVCCGPPVFVDEVRDQTANLVLEKPAKAIEYFEEYQSW</sequence>
<comment type="function">
    <text evidence="5">Siderophore-iron reductase responsible for reducing extracellular iron prior to import. Catalyzes the reductive uptake of Fe(3+) bound to di- and trihydroxamate siderophores. Fe(3+) is reduced to Fe(2+), which then dissociates from the siderophore and can be imported by the high-affinity Fe(2+) transport complex in the plasma membrane.</text>
</comment>
<comment type="catalytic activity">
    <reaction>
        <text>2 a Fe(II)-siderophore + NADP(+) + H(+) = 2 a Fe(III)-siderophore + NADPH</text>
        <dbReference type="Rhea" id="RHEA:28795"/>
        <dbReference type="Rhea" id="RHEA-COMP:11342"/>
        <dbReference type="Rhea" id="RHEA-COMP:11344"/>
        <dbReference type="ChEBI" id="CHEBI:15378"/>
        <dbReference type="ChEBI" id="CHEBI:29033"/>
        <dbReference type="ChEBI" id="CHEBI:29034"/>
        <dbReference type="ChEBI" id="CHEBI:57783"/>
        <dbReference type="ChEBI" id="CHEBI:58349"/>
        <dbReference type="EC" id="1.16.1.9"/>
    </reaction>
</comment>
<comment type="cofactor">
    <cofactor evidence="7">
        <name>FAD</name>
        <dbReference type="ChEBI" id="CHEBI:57692"/>
    </cofactor>
</comment>
<comment type="cofactor">
    <cofactor>
        <name>heme</name>
        <dbReference type="ChEBI" id="CHEBI:30413"/>
    </cofactor>
</comment>
<comment type="subcellular location">
    <subcellularLocation>
        <location evidence="5">Cell membrane</location>
        <topology evidence="5">Multi-pass membrane protein</topology>
    </subcellularLocation>
</comment>
<comment type="induction">
    <text evidence="4 6">By iron deprivation.</text>
</comment>
<comment type="similarity">
    <text evidence="7">Belongs to the ferric reductase (FRE) family.</text>
</comment>